<protein>
    <recommendedName>
        <fullName evidence="1">N-acetylneuraminate lyase</fullName>
        <shortName evidence="1">NAL</shortName>
        <shortName evidence="1">Neu5Ac lyase</shortName>
        <ecNumber evidence="1">4.1.3.3</ecNumber>
    </recommendedName>
    <alternativeName>
        <fullName evidence="1">N-acetylneuraminate pyruvate-lyase</fullName>
    </alternativeName>
    <alternativeName>
        <fullName evidence="1">N-acetylneuraminic acid aldolase</fullName>
    </alternativeName>
    <alternativeName>
        <fullName evidence="1">Sialate lyase</fullName>
    </alternativeName>
    <alternativeName>
        <fullName evidence="1">Sialic acid aldolase</fullName>
    </alternativeName>
    <alternativeName>
        <fullName evidence="1">Sialic acid lyase</fullName>
    </alternativeName>
</protein>
<proteinExistence type="inferred from homology"/>
<evidence type="ECO:0000255" key="1">
    <source>
        <dbReference type="HAMAP-Rule" id="MF_01237"/>
    </source>
</evidence>
<reference key="1">
    <citation type="journal article" date="2006" name="Proc. Natl. Acad. Sci. U.S.A.">
        <title>Identification of genes subject to positive selection in uropathogenic strains of Escherichia coli: a comparative genomics approach.</title>
        <authorList>
            <person name="Chen S.L."/>
            <person name="Hung C.-S."/>
            <person name="Xu J."/>
            <person name="Reigstad C.S."/>
            <person name="Magrini V."/>
            <person name="Sabo A."/>
            <person name="Blasiar D."/>
            <person name="Bieri T."/>
            <person name="Meyer R.R."/>
            <person name="Ozersky P."/>
            <person name="Armstrong J.R."/>
            <person name="Fulton R.S."/>
            <person name="Latreille J.P."/>
            <person name="Spieth J."/>
            <person name="Hooton T.M."/>
            <person name="Mardis E.R."/>
            <person name="Hultgren S.J."/>
            <person name="Gordon J.I."/>
        </authorList>
    </citation>
    <scope>NUCLEOTIDE SEQUENCE [LARGE SCALE GENOMIC DNA]</scope>
    <source>
        <strain>UTI89 / UPEC</strain>
    </source>
</reference>
<organism>
    <name type="scientific">Escherichia coli (strain UTI89 / UPEC)</name>
    <dbReference type="NCBI Taxonomy" id="364106"/>
    <lineage>
        <taxon>Bacteria</taxon>
        <taxon>Pseudomonadati</taxon>
        <taxon>Pseudomonadota</taxon>
        <taxon>Gammaproteobacteria</taxon>
        <taxon>Enterobacterales</taxon>
        <taxon>Enterobacteriaceae</taxon>
        <taxon>Escherichia</taxon>
    </lineage>
</organism>
<keyword id="KW-0119">Carbohydrate metabolism</keyword>
<keyword id="KW-0963">Cytoplasm</keyword>
<keyword id="KW-0456">Lyase</keyword>
<keyword id="KW-0704">Schiff base</keyword>
<gene>
    <name evidence="1" type="primary">nanA</name>
    <name type="ordered locus">UTI89_C3655</name>
</gene>
<sequence length="297" mass="32593">MATNLRGVMAALLTPFDQQQALDKASLRRLVQFNIQQGIDGLYVGGSTGEAFVQSLSEREQVLEIVAEEAKGKIKLIAHVGCVSTAESQQLAASAKRYGFDAVSAVTPFYYPFSFEEHCDHYRAIIDSADGLPMVVYNIPALSGVKLTLDQINTLVTLPGVGALKQTSGDLYQMEQIRREHPDLVLYNGYDEIFASGLLAGADGGIGSTYNIMGWRYQGIVKALKEGDIQTAQKLQTECNKVIDLLIKTGVFRGLKTVLHYMDVVSVPLCRKPFGPVDEKYLPELKALAQQLMQERG</sequence>
<accession>Q1R6B5</accession>
<comment type="function">
    <text evidence="1">Catalyzes the reversible aldol cleavage of N-acetylneuraminic acid (sialic acid; Neu5Ac) to form pyruvate and N-acetylmannosamine (ManNAc) via a Schiff base intermediate.</text>
</comment>
<comment type="catalytic activity">
    <reaction evidence="1">
        <text>aceneuramate = aldehydo-N-acetyl-D-mannosamine + pyruvate</text>
        <dbReference type="Rhea" id="RHEA:23296"/>
        <dbReference type="ChEBI" id="CHEBI:15361"/>
        <dbReference type="ChEBI" id="CHEBI:17122"/>
        <dbReference type="ChEBI" id="CHEBI:173083"/>
        <dbReference type="EC" id="4.1.3.3"/>
    </reaction>
</comment>
<comment type="pathway">
    <text evidence="1">Amino-sugar metabolism; N-acetylneuraminate degradation; D-fructose 6-phosphate from N-acetylneuraminate: step 1/5.</text>
</comment>
<comment type="subunit">
    <text evidence="1">Homotetramer.</text>
</comment>
<comment type="subcellular location">
    <subcellularLocation>
        <location evidence="1">Cytoplasm</location>
    </subcellularLocation>
</comment>
<comment type="similarity">
    <text evidence="1">Belongs to the DapA family. NanA subfamily.</text>
</comment>
<name>NANA_ECOUT</name>
<dbReference type="EC" id="4.1.3.3" evidence="1"/>
<dbReference type="EMBL" id="CP000243">
    <property type="protein sequence ID" value="ABE09099.1"/>
    <property type="molecule type" value="Genomic_DNA"/>
</dbReference>
<dbReference type="RefSeq" id="WP_000224714.1">
    <property type="nucleotide sequence ID" value="NZ_CP064825.1"/>
</dbReference>
<dbReference type="SMR" id="Q1R6B5"/>
<dbReference type="GeneID" id="93778761"/>
<dbReference type="KEGG" id="eci:UTI89_C3655"/>
<dbReference type="HOGENOM" id="CLU_049343_6_0_6"/>
<dbReference type="UniPathway" id="UPA00629">
    <property type="reaction ID" value="UER00680"/>
</dbReference>
<dbReference type="Proteomes" id="UP000001952">
    <property type="component" value="Chromosome"/>
</dbReference>
<dbReference type="GO" id="GO:0005829">
    <property type="term" value="C:cytosol"/>
    <property type="evidence" value="ECO:0007669"/>
    <property type="project" value="TreeGrafter"/>
</dbReference>
<dbReference type="GO" id="GO:0008747">
    <property type="term" value="F:N-acetylneuraminate lyase activity"/>
    <property type="evidence" value="ECO:0007669"/>
    <property type="project" value="UniProtKB-UniRule"/>
</dbReference>
<dbReference type="GO" id="GO:0005975">
    <property type="term" value="P:carbohydrate metabolic process"/>
    <property type="evidence" value="ECO:0007669"/>
    <property type="project" value="UniProtKB-UniRule"/>
</dbReference>
<dbReference type="GO" id="GO:0019262">
    <property type="term" value="P:N-acetylneuraminate catabolic process"/>
    <property type="evidence" value="ECO:0007669"/>
    <property type="project" value="UniProtKB-UniRule"/>
</dbReference>
<dbReference type="CDD" id="cd00954">
    <property type="entry name" value="NAL"/>
    <property type="match status" value="1"/>
</dbReference>
<dbReference type="FunFam" id="3.20.20.70:FF:000039">
    <property type="entry name" value="N-acetylneuraminate lyase"/>
    <property type="match status" value="1"/>
</dbReference>
<dbReference type="Gene3D" id="3.20.20.70">
    <property type="entry name" value="Aldolase class I"/>
    <property type="match status" value="1"/>
</dbReference>
<dbReference type="HAMAP" id="MF_01237">
    <property type="entry name" value="N_acetylneuram_lyase"/>
    <property type="match status" value="1"/>
</dbReference>
<dbReference type="InterPro" id="IPR013785">
    <property type="entry name" value="Aldolase_TIM"/>
</dbReference>
<dbReference type="InterPro" id="IPR002220">
    <property type="entry name" value="DapA-like"/>
</dbReference>
<dbReference type="InterPro" id="IPR005264">
    <property type="entry name" value="NanA"/>
</dbReference>
<dbReference type="InterPro" id="IPR020625">
    <property type="entry name" value="Schiff_base-form_aldolases_AS"/>
</dbReference>
<dbReference type="InterPro" id="IPR020624">
    <property type="entry name" value="Schiff_base-form_aldolases_CS"/>
</dbReference>
<dbReference type="NCBIfam" id="TIGR00683">
    <property type="entry name" value="nanA"/>
    <property type="match status" value="1"/>
</dbReference>
<dbReference type="NCBIfam" id="NF003164">
    <property type="entry name" value="PRK04147.1"/>
    <property type="match status" value="1"/>
</dbReference>
<dbReference type="PANTHER" id="PTHR42849">
    <property type="entry name" value="N-ACETYLNEURAMINATE LYASE"/>
    <property type="match status" value="1"/>
</dbReference>
<dbReference type="PANTHER" id="PTHR42849:SF1">
    <property type="entry name" value="N-ACETYLNEURAMINATE LYASE"/>
    <property type="match status" value="1"/>
</dbReference>
<dbReference type="Pfam" id="PF00701">
    <property type="entry name" value="DHDPS"/>
    <property type="match status" value="1"/>
</dbReference>
<dbReference type="PIRSF" id="PIRSF001365">
    <property type="entry name" value="DHDPS"/>
    <property type="match status" value="1"/>
</dbReference>
<dbReference type="PRINTS" id="PR00146">
    <property type="entry name" value="DHPICSNTHASE"/>
</dbReference>
<dbReference type="SMART" id="SM01130">
    <property type="entry name" value="DHDPS"/>
    <property type="match status" value="1"/>
</dbReference>
<dbReference type="SUPFAM" id="SSF51569">
    <property type="entry name" value="Aldolase"/>
    <property type="match status" value="1"/>
</dbReference>
<dbReference type="PROSITE" id="PS00665">
    <property type="entry name" value="DHDPS_1"/>
    <property type="match status" value="1"/>
</dbReference>
<dbReference type="PROSITE" id="PS00666">
    <property type="entry name" value="DHDPS_2"/>
    <property type="match status" value="1"/>
</dbReference>
<feature type="chain" id="PRO_1000066927" description="N-acetylneuraminate lyase">
    <location>
        <begin position="1"/>
        <end position="297"/>
    </location>
</feature>
<feature type="active site" description="Proton donor" evidence="1">
    <location>
        <position position="137"/>
    </location>
</feature>
<feature type="active site" description="Schiff-base intermediate with substrate" evidence="1">
    <location>
        <position position="165"/>
    </location>
</feature>
<feature type="binding site" evidence="1">
    <location>
        <position position="47"/>
    </location>
    <ligand>
        <name>aceneuramate</name>
        <dbReference type="ChEBI" id="CHEBI:173083"/>
    </ligand>
</feature>
<feature type="binding site" evidence="1">
    <location>
        <position position="48"/>
    </location>
    <ligand>
        <name>aceneuramate</name>
        <dbReference type="ChEBI" id="CHEBI:173083"/>
    </ligand>
</feature>
<feature type="binding site" evidence="1">
    <location>
        <position position="167"/>
    </location>
    <ligand>
        <name>aceneuramate</name>
        <dbReference type="ChEBI" id="CHEBI:173083"/>
    </ligand>
</feature>
<feature type="binding site" evidence="1">
    <location>
        <position position="189"/>
    </location>
    <ligand>
        <name>aceneuramate</name>
        <dbReference type="ChEBI" id="CHEBI:173083"/>
    </ligand>
</feature>
<feature type="binding site" evidence="1">
    <location>
        <position position="191"/>
    </location>
    <ligand>
        <name>aceneuramate</name>
        <dbReference type="ChEBI" id="CHEBI:173083"/>
    </ligand>
</feature>
<feature type="binding site" evidence="1">
    <location>
        <position position="192"/>
    </location>
    <ligand>
        <name>aceneuramate</name>
        <dbReference type="ChEBI" id="CHEBI:173083"/>
    </ligand>
</feature>
<feature type="binding site" evidence="1">
    <location>
        <position position="208"/>
    </location>
    <ligand>
        <name>aceneuramate</name>
        <dbReference type="ChEBI" id="CHEBI:173083"/>
    </ligand>
</feature>